<organism>
    <name type="scientific">Mycobacterium bovis (strain BCG / Pasteur 1173P2)</name>
    <dbReference type="NCBI Taxonomy" id="410289"/>
    <lineage>
        <taxon>Bacteria</taxon>
        <taxon>Bacillati</taxon>
        <taxon>Actinomycetota</taxon>
        <taxon>Actinomycetes</taxon>
        <taxon>Mycobacteriales</taxon>
        <taxon>Mycobacteriaceae</taxon>
        <taxon>Mycobacterium</taxon>
        <taxon>Mycobacterium tuberculosis complex</taxon>
    </lineage>
</organism>
<sequence>MKIRLHTLLAVLTAAPLLLAAAGCGSKPPSGSPETGAGAGTVATTPASSPVTLAETGSTLLYPLFNLWGPAFHERYPNVTITAQGTGSGAGIAQAAAGTVNIGASDAYLSEGDMAAHKGLMNIALAISAQQVNYNLPGVSEHLKLNGKVLAAMYQGTIKTWDDPQIAALNPGVNLPGTAVVPLHRSDGSGDTFLFTQYLSKQDPEGWGKSPGFGTTVDFPAVPGALGENGNGGMVTGCAETPGCVAYIGISFLDQASQRGLGEAQLGNSSGNFLLPDAQSIQAAAAGFASKTPANQAISMIDGPAPDGYPIINYEYAIVNNRQKDAATAQTLQAFLHWAITDGNKASFLDQAHFQPLPPAVVKLSDALIATISS</sequence>
<feature type="signal peptide" evidence="3">
    <location>
        <begin position="1"/>
        <end position="23"/>
    </location>
</feature>
<feature type="chain" id="PRO_5002615734" description="Phosphate-binding protein PstS1">
    <location>
        <begin position="24"/>
        <end position="374"/>
    </location>
</feature>
<feature type="region of interest" description="Disordered" evidence="4">
    <location>
        <begin position="25"/>
        <end position="48"/>
    </location>
</feature>
<feature type="binding site" evidence="1">
    <location>
        <begin position="58"/>
        <end position="60"/>
    </location>
    <ligand>
        <name>phosphate</name>
        <dbReference type="ChEBI" id="CHEBI:43474"/>
    </ligand>
</feature>
<feature type="binding site" evidence="1">
    <location>
        <position position="88"/>
    </location>
    <ligand>
        <name>phosphate</name>
        <dbReference type="ChEBI" id="CHEBI:43474"/>
    </ligand>
</feature>
<feature type="binding site" evidence="1">
    <location>
        <position position="106"/>
    </location>
    <ligand>
        <name>phosphate</name>
        <dbReference type="ChEBI" id="CHEBI:43474"/>
    </ligand>
</feature>
<feature type="binding site" evidence="1">
    <location>
        <begin position="189"/>
        <end position="191"/>
    </location>
    <ligand>
        <name>phosphate</name>
        <dbReference type="ChEBI" id="CHEBI:43474"/>
    </ligand>
</feature>
<feature type="lipid moiety-binding region" description="N-palmitoyl cysteine" evidence="3">
    <location>
        <position position="24"/>
    </location>
</feature>
<feature type="lipid moiety-binding region" description="S-diacylglycerol cysteine" evidence="3">
    <location>
        <position position="24"/>
    </location>
</feature>
<name>PSTS1_MYCBP</name>
<gene>
    <name type="primary">pstS1</name>
    <name type="ordered locus">BCG_0988</name>
</gene>
<evidence type="ECO:0000250" key="1">
    <source>
        <dbReference type="UniProtKB" id="P9WGT7"/>
    </source>
</evidence>
<evidence type="ECO:0000250" key="2">
    <source>
        <dbReference type="UniProtKB" id="P9WGU1"/>
    </source>
</evidence>
<evidence type="ECO:0000255" key="3">
    <source>
        <dbReference type="PROSITE-ProRule" id="PRU00303"/>
    </source>
</evidence>
<evidence type="ECO:0000256" key="4">
    <source>
        <dbReference type="SAM" id="MobiDB-lite"/>
    </source>
</evidence>
<evidence type="ECO:0000269" key="5">
    <source>
    </source>
</evidence>
<evidence type="ECO:0000303" key="6">
    <source>
    </source>
</evidence>
<evidence type="ECO:0000305" key="7"/>
<protein>
    <recommendedName>
        <fullName evidence="6">Phosphate-binding protein PstS1</fullName>
        <shortName>PstS-1</shortName>
    </recommendedName>
    <alternativeName>
        <fullName>38-kDa lipoprotein</fullName>
        <shortName>P38</shortName>
    </alternativeName>
</protein>
<accession>A0A0H3M950</accession>
<reference key="1">
    <citation type="journal article" date="2007" name="Proc. Natl. Acad. Sci. U.S.A.">
        <title>Genome plasticity of BCG and impact on vaccine efficacy.</title>
        <authorList>
            <person name="Brosch R."/>
            <person name="Gordon S.V."/>
            <person name="Garnier T."/>
            <person name="Eiglmeier K."/>
            <person name="Frigui W."/>
            <person name="Valenti P."/>
            <person name="Dos Santos S."/>
            <person name="Duthoy S."/>
            <person name="Lacroix C."/>
            <person name="Garcia-Pelayo C."/>
            <person name="Inwald J.K."/>
            <person name="Golby P."/>
            <person name="Garcia J.N."/>
            <person name="Hewinson R.G."/>
            <person name="Behr M.A."/>
            <person name="Quail M.A."/>
            <person name="Churcher C."/>
            <person name="Barrell B.G."/>
            <person name="Parkhill J."/>
            <person name="Cole S.T."/>
        </authorList>
    </citation>
    <scope>NUCLEOTIDE SEQUENCE [LARGE SCALE GENOMIC DNA]</scope>
    <source>
        <strain>BCG / Pasteur 1173P2</strain>
    </source>
</reference>
<reference key="2">
    <citation type="journal article" date="1997" name="J. Bacteriol.">
        <title>Three different putative phosphate transport receptors are encoded by the Mycobacterium tuberculosis genome and are present at the surface of Mycobacterium bovis BCG.</title>
        <authorList>
            <person name="Lefevre P."/>
            <person name="Braibant M."/>
            <person name="de Wit L."/>
            <person name="Kalai M."/>
            <person name="Roeper D."/>
            <person name="Groetzinger J."/>
            <person name="Delville J.-P."/>
            <person name="Peirs P."/>
            <person name="Ooms J."/>
            <person name="Huygen K."/>
            <person name="Content J."/>
        </authorList>
    </citation>
    <scope>SUBCELLULAR LOCATION</scope>
    <scope>INDUCTION BY PHOSPHATE STARVATION</scope>
    <source>
        <strain>BCG</strain>
    </source>
</reference>
<comment type="function">
    <text evidence="2 7">Functions in inorganic phosphate uptake, a phosphate-binding protein, although probably not the main uptake protein under phosphate starvation (By similarity). Part of the ABC transporter complex PstSACB involved in phosphate import (Probable).</text>
</comment>
<comment type="function">
    <text evidence="2">A host TLR2 agonist (toll-like receptor), requires both host TLR1 and TLR2 as coreceptors.</text>
</comment>
<comment type="subunit">
    <text evidence="7">The complex is composed of two ATP-binding proteins (PstB), two transmembrane proteins (PstC and PstA) and a solute-binding protein (PstS).</text>
</comment>
<comment type="subcellular location">
    <subcellularLocation>
        <location evidence="3">Cell membrane</location>
        <topology evidence="3">Lipid-anchor</topology>
    </subcellularLocation>
    <subcellularLocation>
        <location evidence="5">Secreted</location>
    </subcellularLocation>
    <text evidence="5">Present on the cell surface.</text>
</comment>
<comment type="induction">
    <text evidence="5">By phosphate starvation (at protein level).</text>
</comment>
<comment type="similarity">
    <text evidence="7">Belongs to the PstS family.</text>
</comment>
<proteinExistence type="evidence at protein level"/>
<keyword id="KW-1003">Cell membrane</keyword>
<keyword id="KW-0449">Lipoprotein</keyword>
<keyword id="KW-0472">Membrane</keyword>
<keyword id="KW-0564">Palmitate</keyword>
<keyword id="KW-0592">Phosphate transport</keyword>
<keyword id="KW-0964">Secreted</keyword>
<keyword id="KW-0732">Signal</keyword>
<keyword id="KW-0813">Transport</keyword>
<dbReference type="EMBL" id="AM408590">
    <property type="protein sequence ID" value="CAL70974.1"/>
    <property type="molecule type" value="Genomic_DNA"/>
</dbReference>
<dbReference type="SMR" id="A0A0H3M950"/>
<dbReference type="KEGG" id="mbb:BCG_0988"/>
<dbReference type="HOGENOM" id="CLU_034528_1_2_11"/>
<dbReference type="Proteomes" id="UP000001472">
    <property type="component" value="Chromosome"/>
</dbReference>
<dbReference type="GO" id="GO:0043190">
    <property type="term" value="C:ATP-binding cassette (ABC) transporter complex"/>
    <property type="evidence" value="ECO:0007669"/>
    <property type="project" value="InterPro"/>
</dbReference>
<dbReference type="GO" id="GO:0005576">
    <property type="term" value="C:extracellular region"/>
    <property type="evidence" value="ECO:0007669"/>
    <property type="project" value="UniProtKB-SubCell"/>
</dbReference>
<dbReference type="GO" id="GO:0042301">
    <property type="term" value="F:phosphate ion binding"/>
    <property type="evidence" value="ECO:0007669"/>
    <property type="project" value="InterPro"/>
</dbReference>
<dbReference type="GO" id="GO:0035435">
    <property type="term" value="P:phosphate ion transmembrane transport"/>
    <property type="evidence" value="ECO:0007669"/>
    <property type="project" value="InterPro"/>
</dbReference>
<dbReference type="CDD" id="cd01006">
    <property type="entry name" value="PBP2_phosphate_binding"/>
    <property type="match status" value="1"/>
</dbReference>
<dbReference type="FunFam" id="3.40.190.10:FF:000235">
    <property type="entry name" value="Phosphate-binding protein PstS"/>
    <property type="match status" value="1"/>
</dbReference>
<dbReference type="Gene3D" id="3.40.190.10">
    <property type="entry name" value="Periplasmic binding protein-like II"/>
    <property type="match status" value="2"/>
</dbReference>
<dbReference type="InterPro" id="IPR005673">
    <property type="entry name" value="ABC_phos-bd_PstS"/>
</dbReference>
<dbReference type="InterPro" id="IPR024370">
    <property type="entry name" value="PBP_domain"/>
</dbReference>
<dbReference type="InterPro" id="IPR050962">
    <property type="entry name" value="Phosphate-bind_PstS"/>
</dbReference>
<dbReference type="NCBIfam" id="TIGR00975">
    <property type="entry name" value="3a0107s03"/>
    <property type="match status" value="1"/>
</dbReference>
<dbReference type="PANTHER" id="PTHR42996">
    <property type="entry name" value="PHOSPHATE-BINDING PROTEIN PSTS"/>
    <property type="match status" value="1"/>
</dbReference>
<dbReference type="PANTHER" id="PTHR42996:SF1">
    <property type="entry name" value="PHOSPHATE-BINDING PROTEIN PSTS"/>
    <property type="match status" value="1"/>
</dbReference>
<dbReference type="Pfam" id="PF12849">
    <property type="entry name" value="PBP_like_2"/>
    <property type="match status" value="1"/>
</dbReference>
<dbReference type="PIRSF" id="PIRSF002756">
    <property type="entry name" value="PstS"/>
    <property type="match status" value="1"/>
</dbReference>
<dbReference type="SUPFAM" id="SSF53850">
    <property type="entry name" value="Periplasmic binding protein-like II"/>
    <property type="match status" value="1"/>
</dbReference>
<dbReference type="PROSITE" id="PS51257">
    <property type="entry name" value="PROKAR_LIPOPROTEIN"/>
    <property type="match status" value="1"/>
</dbReference>